<feature type="chain" id="PRO_0000431910" description="RNA replication polyprotein">
    <location>
        <begin position="1"/>
        <end position="1967"/>
    </location>
</feature>
<feature type="chain" id="PRO_0000431911" description="Helicase" evidence="8">
    <location>
        <begin position="1473"/>
        <end position="1967"/>
    </location>
</feature>
<feature type="domain" description="Alphavirus-like MT" evidence="7">
    <location>
        <begin position="63"/>
        <end position="252"/>
    </location>
</feature>
<feature type="domain" description="Fe2OG dioxygenase" evidence="4">
    <location>
        <begin position="750"/>
        <end position="841"/>
    </location>
</feature>
<feature type="domain" description="OTU" evidence="2">
    <location>
        <begin position="884"/>
        <end position="991"/>
    </location>
</feature>
<feature type="domain" description="Peptidase C23" evidence="5">
    <location>
        <begin position="990"/>
        <end position="1080"/>
    </location>
</feature>
<feature type="domain" description="(+)RNA virus helicase ATP-binding" evidence="6">
    <location>
        <begin position="1133"/>
        <end position="1308"/>
    </location>
</feature>
<feature type="domain" description="(+)RNA virus helicase C-terminal" evidence="6">
    <location>
        <begin position="1309"/>
        <end position="1455"/>
    </location>
</feature>
<feature type="domain" description="RdRp catalytic" evidence="3">
    <location>
        <begin position="1748"/>
        <end position="1855"/>
    </location>
</feature>
<feature type="active site" evidence="8">
    <location>
        <position position="994"/>
    </location>
</feature>
<feature type="active site" evidence="8">
    <location>
        <position position="1075"/>
    </location>
</feature>
<feature type="binding site" evidence="4">
    <location>
        <position position="768"/>
    </location>
    <ligand>
        <name>Fe cation</name>
        <dbReference type="ChEBI" id="CHEBI:24875"/>
    </ligand>
</feature>
<feature type="binding site" evidence="4">
    <location>
        <position position="770"/>
    </location>
    <ligand>
        <name>Fe cation</name>
        <dbReference type="ChEBI" id="CHEBI:24875"/>
    </ligand>
</feature>
<feature type="binding site" evidence="4">
    <location>
        <position position="823"/>
    </location>
    <ligand>
        <name>Fe cation</name>
        <dbReference type="ChEBI" id="CHEBI:24875"/>
    </ligand>
</feature>
<feature type="binding site" evidence="4">
    <location>
        <position position="832"/>
    </location>
    <ligand>
        <name>2-oxoglutarate</name>
        <dbReference type="ChEBI" id="CHEBI:16810"/>
    </ligand>
</feature>
<feature type="binding site" evidence="6">
    <location>
        <begin position="1166"/>
        <end position="1173"/>
    </location>
    <ligand>
        <name>ATP</name>
        <dbReference type="ChEBI" id="CHEBI:30616"/>
    </ligand>
</feature>
<feature type="site" description="Cleavage; by viral protease" evidence="8">
    <location>
        <begin position="1472"/>
        <end position="1473"/>
    </location>
</feature>
<sequence>MALTYRSPVEEVLTLFEPTAQSLIASAAVSAFQRHEKDNFEWFRYSVPAFAKEHLSKAGIYLSPYAGFPHSHPVCKTLENYILYVVVPSIVNSTFFFVGIKDFKINFLKSRFDKLNMISALNRYVSSADKIRYGNDFVIRAGVEHRALKRHRGLVDSPTLKALMPNVKSGSKLFLHDELHYWSKEELIGFLEICEPEVLLGTVIYPPELLIGSDCSLNPWCYEYEVKKKKLLFYPDGVRSEGYEQPLSGGYLLQTSRIKLPNAGIYCVDLLCSRFAHHLFSITRGDLITPDNRSFGPFEAVHSGALAGISRGKPNFYPVSQHTILRVYRYLRSLKKPDKQSAMAKFSQIVHEPCGRAVKFMEEFSDLIINTGTLRTVINPEQVKLFFGNLGRCMPPCFASKLKGTRTVCLDEFISMLRPLSVDVTLETISMHSMTMVVTTWSQEAEEGVDLPKIFEEKWEGKQSLDRTEAPYLGLAPFVDYKIQWRLQFNIPKFLNQLAELFVNSCSVNGGVRSMSIPAYLRRLATCRSCVGRAMLCCLTEVDIASLRVVVRNRYPYTEDFYRCRRRWFLRIGAQRRPSFYIEDAKHLERLGQFEEEQFQRPMSRRSLYTLASVSMNGTDDPFCSDCFYDPVPVARAKIVPTPTVIVERALEPLAIDTGTTSDAPCDAPGATCLRGAQAVVCACGLSMAVSAVPYAELKMDFYPDALKGRDAAWYSKEDREYKYNGGSHLCRGWPKWLQLWMQANGVDETYDCMLAQRYGAQGKIGFHADNEEIFMRGAPVHTVSMDGNADFGTECAAGRQYTTLRGNVQFTMPSGFQETHKHAVRNTTAGRVSYTFRRLAKKDESRVIEEVVEVETKDMGFSSSLFGVQIIVDEPCDGVEETFNVQCVPGDGNCFWHSLGSFTGLTVECMKAGIKNFACGPEGAEKLSRQLEPNVWAEDEALCAACAHLGVDLVIFDEDQGFKMLYRYPGNKREALLRLKGSHFEPLEPKEMCVVKAIAQAVKRSPMDVLRVALKKMGEDFKEQICRGKGVMLDVFMVLAKIFDVSACVLQGTEQIMINPKGRIKGLFRMTTDHLSYDGVPDKVKHSEVNVYKHDVALQIEDLIELRELSSLVEYTPSFSRAKLLADCLHDGSTGVMCSELYNDKGHLCPEGRETTRVTIGVLLGTFGCGKSRLFKEILFKLCGKSVCYISPRKALCDSFDDEIRKARGNMGERGIKHYKSLTFEKAILQASKLHKGSLVIIDEIQLYPPGYLDLLLLLAGPTMKYFALGDPCQSDYDSEKDRTILGSVRSDVFELLDGIEYKFNILSRRFQSSLFRGRLPCLMYEEDLEAGAPLRLIDGLESIDTSAAYSRCCLVSSFEEKKIVNAYFGERTKCLTFGESTGMTFDVGCVLITSISAHTSEQRWITALSRFRKDIVFVNAASVAWDTLQSVYANRWLGRFLNRSARQEDLRRMLPGTPLFVEGFQKNLLGADEGKRECKLEGDPWLKTMVDLLQVEDMEDIEIAKEVLQDEWCKTHLPQCELESVRARWVHKILAKEFREKRMGCLVSEQFTDQHSKQMGKHLTNSAERFETIYPRHRAADTVTFIMAVRKRLSFSCPIKESAKLNQALPYGPFLLKEFLKRVPLKPMHDRKMMEQAKFDFEEKKTSKSAATIENHSNRSCRDWLIDVGLVFSKSQLCTKFDNRFRDAKRAQTIVCFQHAVLCRFAPYMRYIEKKLNEVLPSKYYIHSGKGLEELNRWVIEGRFEGVCTESDYEAFDASQDHYIVAFEICLMRYLGLPNDLIEDYKFIKTHLGSKLGNFAIMRFSGEASTFLFNTMANMLFTFLQYDLKGNERICFAGDDMCANGRLHVSSKHKNFMSKLKLKAKVSNTMNPTFCGWNLSSDGIFKKPQLVLERLCIAKETNNLANCIDNYAIEVSFAYLMGERAKQRMDEEEVEAFYNCVRIIVKSKHLLKSDVATIYQTARVD</sequence>
<gene>
    <name evidence="9" type="ORF">ORF1</name>
</gene>
<reference key="1">
    <citation type="journal article" date="1994" name="J. Gen. Virol.">
        <title>Nucleotide sequence of the carlavirus associated with blueberry scorch and similar diseases.</title>
        <authorList>
            <person name="Cavileer T.D."/>
            <person name="Halpern B.T."/>
            <person name="Lawrence D.M."/>
            <person name="Podleckis E.V."/>
            <person name="Martin R.R."/>
            <person name="Hillman B.I."/>
        </authorList>
    </citation>
    <scope>NUCLEOTIDE SEQUENCE [GENOMIC RNA]</scope>
    <source>
        <strain evidence="11">NJ-2</strain>
    </source>
</reference>
<reference key="2">
    <citation type="journal article" date="1995" name="Virology">
        <title>Autocatalytic processing of the 223-kDa protein of blueberry scorch carlavirus by a papain-like proteinase.</title>
        <authorList>
            <person name="Lawrence D.M."/>
            <person name="Rozanov M.N."/>
            <person name="Hillman B.I."/>
        </authorList>
    </citation>
    <scope>NUCLEOTIDE SEQUENCE [GENOMIC RNA]</scope>
    <scope>FUNCTION (PROTEASE)</scope>
    <scope>ACTIVE SITE (PROTEASE)</scope>
    <scope>PROTEOLYTIC PROCESSING OF POLYPROTEIN</scope>
    <source>
        <strain evidence="11">NJ-2</strain>
    </source>
</reference>
<keyword id="KW-0067">ATP-binding</keyword>
<keyword id="KW-0223">Dioxygenase</keyword>
<keyword id="KW-0347">Helicase</keyword>
<keyword id="KW-0378">Hydrolase</keyword>
<keyword id="KW-0408">Iron</keyword>
<keyword id="KW-0479">Metal-binding</keyword>
<keyword id="KW-0511">Multifunctional enzyme</keyword>
<keyword id="KW-0547">Nucleotide-binding</keyword>
<keyword id="KW-0548">Nucleotidyltransferase</keyword>
<keyword id="KW-0560">Oxidoreductase</keyword>
<keyword id="KW-0645">Protease</keyword>
<keyword id="KW-1185">Reference proteome</keyword>
<keyword id="KW-0696">RNA-directed RNA polymerase</keyword>
<keyword id="KW-0788">Thiol protease</keyword>
<keyword id="KW-0808">Transferase</keyword>
<keyword id="KW-0693">Viral RNA replication</keyword>
<name>RDRP_BBSCV</name>
<dbReference type="EC" id="2.1.1.-" evidence="10"/>
<dbReference type="EC" id="1.14.11.-" evidence="4"/>
<dbReference type="EC" id="3.4.22.-" evidence="8"/>
<dbReference type="EC" id="2.7.7.48" evidence="3"/>
<dbReference type="EC" id="3.6.4.13" evidence="10"/>
<dbReference type="EMBL" id="L25658">
    <property type="protein sequence ID" value="AAA68984.1"/>
    <property type="molecule type" value="Genomic_RNA"/>
</dbReference>
<dbReference type="RefSeq" id="NP_612579.1">
    <property type="nucleotide sequence ID" value="NC_003499.1"/>
</dbReference>
<dbReference type="KEGG" id="vg:935434"/>
<dbReference type="Proteomes" id="UP000030600">
    <property type="component" value="Genome"/>
</dbReference>
<dbReference type="GO" id="GO:0005524">
    <property type="term" value="F:ATP binding"/>
    <property type="evidence" value="ECO:0007669"/>
    <property type="project" value="UniProtKB-KW"/>
</dbReference>
<dbReference type="GO" id="GO:0016887">
    <property type="term" value="F:ATP hydrolysis activity"/>
    <property type="evidence" value="ECO:0007669"/>
    <property type="project" value="RHEA"/>
</dbReference>
<dbReference type="GO" id="GO:0008234">
    <property type="term" value="F:cysteine-type peptidase activity"/>
    <property type="evidence" value="ECO:0000314"/>
    <property type="project" value="UniProtKB"/>
</dbReference>
<dbReference type="GO" id="GO:0051213">
    <property type="term" value="F:dioxygenase activity"/>
    <property type="evidence" value="ECO:0007669"/>
    <property type="project" value="UniProtKB-KW"/>
</dbReference>
<dbReference type="GO" id="GO:0046872">
    <property type="term" value="F:metal ion binding"/>
    <property type="evidence" value="ECO:0007669"/>
    <property type="project" value="UniProtKB-KW"/>
</dbReference>
<dbReference type="GO" id="GO:0008174">
    <property type="term" value="F:mRNA methyltransferase activity"/>
    <property type="evidence" value="ECO:0007669"/>
    <property type="project" value="InterPro"/>
</dbReference>
<dbReference type="GO" id="GO:0003723">
    <property type="term" value="F:RNA binding"/>
    <property type="evidence" value="ECO:0007669"/>
    <property type="project" value="InterPro"/>
</dbReference>
<dbReference type="GO" id="GO:0003724">
    <property type="term" value="F:RNA helicase activity"/>
    <property type="evidence" value="ECO:0007669"/>
    <property type="project" value="UniProtKB-EC"/>
</dbReference>
<dbReference type="GO" id="GO:0003968">
    <property type="term" value="F:RNA-directed RNA polymerase activity"/>
    <property type="evidence" value="ECO:0007669"/>
    <property type="project" value="UniProtKB-KW"/>
</dbReference>
<dbReference type="GO" id="GO:0006351">
    <property type="term" value="P:DNA-templated transcription"/>
    <property type="evidence" value="ECO:0007669"/>
    <property type="project" value="InterPro"/>
</dbReference>
<dbReference type="GO" id="GO:0016556">
    <property type="term" value="P:mRNA modification"/>
    <property type="evidence" value="ECO:0007669"/>
    <property type="project" value="InterPro"/>
</dbReference>
<dbReference type="GO" id="GO:0006508">
    <property type="term" value="P:proteolysis"/>
    <property type="evidence" value="ECO:0007669"/>
    <property type="project" value="UniProtKB-KW"/>
</dbReference>
<dbReference type="GO" id="GO:0006396">
    <property type="term" value="P:RNA processing"/>
    <property type="evidence" value="ECO:0007669"/>
    <property type="project" value="InterPro"/>
</dbReference>
<dbReference type="GO" id="GO:0039694">
    <property type="term" value="P:viral RNA genome replication"/>
    <property type="evidence" value="ECO:0007669"/>
    <property type="project" value="InterPro"/>
</dbReference>
<dbReference type="CDD" id="cd23245">
    <property type="entry name" value="Betaflexiviridae_RdRp"/>
    <property type="match status" value="1"/>
</dbReference>
<dbReference type="CDD" id="cd22792">
    <property type="entry name" value="OTU_RDRP-like"/>
    <property type="match status" value="1"/>
</dbReference>
<dbReference type="Gene3D" id="3.90.70.80">
    <property type="match status" value="1"/>
</dbReference>
<dbReference type="Gene3D" id="2.60.120.590">
    <property type="entry name" value="Alpha-ketoglutarate-dependent dioxygenase AlkB-like"/>
    <property type="match status" value="1"/>
</dbReference>
<dbReference type="InterPro" id="IPR027351">
    <property type="entry name" value="(+)RNA_virus_helicase_core_dom"/>
</dbReference>
<dbReference type="InterPro" id="IPR037151">
    <property type="entry name" value="AlkB-like_sf"/>
</dbReference>
<dbReference type="InterPro" id="IPR002588">
    <property type="entry name" value="Alphavirus-like_MT_dom"/>
</dbReference>
<dbReference type="InterPro" id="IPR043502">
    <property type="entry name" value="DNA/RNA_pol_sf"/>
</dbReference>
<dbReference type="InterPro" id="IPR044861">
    <property type="entry name" value="IPNS-like_FE2OG_OXY"/>
</dbReference>
<dbReference type="InterPro" id="IPR003323">
    <property type="entry name" value="OTU_dom"/>
</dbReference>
<dbReference type="InterPro" id="IPR027417">
    <property type="entry name" value="P-loop_NTPase"/>
</dbReference>
<dbReference type="InterPro" id="IPR008041">
    <property type="entry name" value="Peptidase_C23"/>
</dbReference>
<dbReference type="InterPro" id="IPR001788">
    <property type="entry name" value="RNA-dep_RNA_pol_alsuvir"/>
</dbReference>
<dbReference type="InterPro" id="IPR007094">
    <property type="entry name" value="RNA-dir_pol_PSvirus"/>
</dbReference>
<dbReference type="Pfam" id="PF03171">
    <property type="entry name" value="2OG-FeII_Oxy"/>
    <property type="match status" value="1"/>
</dbReference>
<dbReference type="Pfam" id="PF05379">
    <property type="entry name" value="Peptidase_C23"/>
    <property type="match status" value="1"/>
</dbReference>
<dbReference type="Pfam" id="PF00978">
    <property type="entry name" value="RdRP_2"/>
    <property type="match status" value="1"/>
</dbReference>
<dbReference type="Pfam" id="PF01443">
    <property type="entry name" value="Viral_helicase1"/>
    <property type="match status" value="1"/>
</dbReference>
<dbReference type="Pfam" id="PF01660">
    <property type="entry name" value="Vmethyltransf"/>
    <property type="match status" value="1"/>
</dbReference>
<dbReference type="SUPFAM" id="SSF51197">
    <property type="entry name" value="Clavaminate synthase-like"/>
    <property type="match status" value="1"/>
</dbReference>
<dbReference type="SUPFAM" id="SSF56672">
    <property type="entry name" value="DNA/RNA polymerases"/>
    <property type="match status" value="1"/>
</dbReference>
<dbReference type="SUPFAM" id="SSF52540">
    <property type="entry name" value="P-loop containing nucleoside triphosphate hydrolases"/>
    <property type="match status" value="1"/>
</dbReference>
<dbReference type="PROSITE" id="PS51743">
    <property type="entry name" value="ALPHAVIRUS_MT"/>
    <property type="match status" value="1"/>
</dbReference>
<dbReference type="PROSITE" id="PS50802">
    <property type="entry name" value="OTU"/>
    <property type="match status" value="1"/>
</dbReference>
<dbReference type="PROSITE" id="PS51492">
    <property type="entry name" value="PEPTIDASE_C23"/>
    <property type="match status" value="1"/>
</dbReference>
<dbReference type="PROSITE" id="PS51657">
    <property type="entry name" value="PSRV_HELICASE"/>
    <property type="match status" value="1"/>
</dbReference>
<dbReference type="PROSITE" id="PS50507">
    <property type="entry name" value="RDRP_SSRNA_POS"/>
    <property type="match status" value="1"/>
</dbReference>
<accession>Q65652</accession>
<proteinExistence type="evidence at protein level"/>
<protein>
    <recommendedName>
        <fullName evidence="9">RNA replication polyprotein</fullName>
    </recommendedName>
    <alternativeName>
        <fullName evidence="9">223 kDa protein</fullName>
    </alternativeName>
    <alternativeName>
        <fullName evidence="9">ORF1 protein</fullName>
    </alternativeName>
    <domain>
        <recommendedName>
            <fullName evidence="1">Viral methyltransferase</fullName>
            <ecNumber evidence="10">2.1.1.-</ecNumber>
        </recommendedName>
    </domain>
    <domain>
        <recommendedName>
            <fullName evidence="1">Putative Fe(2+) 2-oxoglutarate dioxygenase</fullName>
            <ecNumber evidence="4">1.14.11.-</ecNumber>
        </recommendedName>
    </domain>
    <domain>
        <recommendedName>
            <fullName evidence="9">Protease</fullName>
            <ecNumber evidence="8">3.4.22.-</ecNumber>
        </recommendedName>
    </domain>
    <domain>
        <recommendedName>
            <fullName evidence="3">RNA-directed RNA polymerase</fullName>
            <ecNumber evidence="3">2.7.7.48</ecNumber>
        </recommendedName>
    </domain>
    <component>
        <recommendedName>
            <fullName evidence="9">Helicase</fullName>
            <ecNumber evidence="10">3.6.4.13</ecNumber>
        </recommendedName>
    </component>
</protein>
<comment type="function">
    <molecule>RNA replication polyprotein</molecule>
    <text evidence="3 10">RNA-directed RNA polymerase involved in viral RNA replication.</text>
</comment>
<comment type="function">
    <text evidence="8">Protease: Thiol protease that cleaves the polyprotein.</text>
</comment>
<comment type="catalytic activity">
    <reaction evidence="10">
        <text>ATP + H2O = ADP + phosphate + H(+)</text>
        <dbReference type="Rhea" id="RHEA:13065"/>
        <dbReference type="ChEBI" id="CHEBI:15377"/>
        <dbReference type="ChEBI" id="CHEBI:15378"/>
        <dbReference type="ChEBI" id="CHEBI:30616"/>
        <dbReference type="ChEBI" id="CHEBI:43474"/>
        <dbReference type="ChEBI" id="CHEBI:456216"/>
        <dbReference type="EC" id="3.6.4.13"/>
    </reaction>
</comment>
<comment type="catalytic activity">
    <reaction evidence="3">
        <text>RNA(n) + a ribonucleoside 5'-triphosphate = RNA(n+1) + diphosphate</text>
        <dbReference type="Rhea" id="RHEA:21248"/>
        <dbReference type="Rhea" id="RHEA-COMP:14527"/>
        <dbReference type="Rhea" id="RHEA-COMP:17342"/>
        <dbReference type="ChEBI" id="CHEBI:33019"/>
        <dbReference type="ChEBI" id="CHEBI:61557"/>
        <dbReference type="ChEBI" id="CHEBI:140395"/>
        <dbReference type="EC" id="2.7.7.48"/>
    </reaction>
</comment>
<comment type="cofactor">
    <cofactor evidence="4">
        <name>Fe(2+)</name>
        <dbReference type="ChEBI" id="CHEBI:29033"/>
    </cofactor>
    <text evidence="4">Binds 1 Fe(2+) ion per subunit.</text>
</comment>
<comment type="PTM">
    <text evidence="8">Specific enzymatic cleavages by the viral protease yield mature proteins.</text>
</comment>
<comment type="similarity">
    <text evidence="10">Belongs to the potexviruses/carlaviruses RNA replication protein family.</text>
</comment>
<evidence type="ECO:0000255" key="1"/>
<evidence type="ECO:0000255" key="2">
    <source>
        <dbReference type="PROSITE-ProRule" id="PRU00139"/>
    </source>
</evidence>
<evidence type="ECO:0000255" key="3">
    <source>
        <dbReference type="PROSITE-ProRule" id="PRU00539"/>
    </source>
</evidence>
<evidence type="ECO:0000255" key="4">
    <source>
        <dbReference type="PROSITE-ProRule" id="PRU00805"/>
    </source>
</evidence>
<evidence type="ECO:0000255" key="5">
    <source>
        <dbReference type="PROSITE-ProRule" id="PRU00825"/>
    </source>
</evidence>
<evidence type="ECO:0000255" key="6">
    <source>
        <dbReference type="PROSITE-ProRule" id="PRU00990"/>
    </source>
</evidence>
<evidence type="ECO:0000255" key="7">
    <source>
        <dbReference type="PROSITE-ProRule" id="PRU01079"/>
    </source>
</evidence>
<evidence type="ECO:0000269" key="8">
    <source>
    </source>
</evidence>
<evidence type="ECO:0000303" key="9">
    <source>
    </source>
</evidence>
<evidence type="ECO:0000305" key="10"/>
<evidence type="ECO:0000312" key="11">
    <source>
        <dbReference type="EMBL" id="AAA68984.1"/>
    </source>
</evidence>
<organismHost>
    <name type="scientific">Vaccinium corymbosum</name>
    <name type="common">Highbush blueberry</name>
    <dbReference type="NCBI Taxonomy" id="69266"/>
</organismHost>
<organismHost>
    <name type="scientific">Vaccinium macrocarpon</name>
    <name type="common">Large cranberry</name>
    <name type="synonym">Oxycoccus macrocarpus</name>
    <dbReference type="NCBI Taxonomy" id="13750"/>
</organismHost>
<organism>
    <name type="scientific">Blueberry scorch virus</name>
    <name type="common">BBScV</name>
    <dbReference type="NCBI Taxonomy" id="31722"/>
    <lineage>
        <taxon>Viruses</taxon>
        <taxon>Riboviria</taxon>
        <taxon>Orthornavirae</taxon>
        <taxon>Kitrinoviricota</taxon>
        <taxon>Alsuviricetes</taxon>
        <taxon>Tymovirales</taxon>
        <taxon>Betaflexiviridae</taxon>
        <taxon>Quinvirinae</taxon>
        <taxon>Carlavirus</taxon>
    </lineage>
</organism>